<proteinExistence type="inferred from homology"/>
<feature type="chain" id="PRO_0000092804" description="Phosphate import ATP-binding protein PstB">
    <location>
        <begin position="1"/>
        <end position="249"/>
    </location>
</feature>
<feature type="domain" description="ABC transporter" evidence="1">
    <location>
        <begin position="4"/>
        <end position="244"/>
    </location>
</feature>
<feature type="binding site" evidence="1">
    <location>
        <begin position="36"/>
        <end position="43"/>
    </location>
    <ligand>
        <name>ATP</name>
        <dbReference type="ChEBI" id="CHEBI:30616"/>
    </ligand>
</feature>
<accession>Q895Y0</accession>
<dbReference type="EC" id="7.3.2.1" evidence="1"/>
<dbReference type="EMBL" id="AE015927">
    <property type="protein sequence ID" value="AAO35710.1"/>
    <property type="molecule type" value="Genomic_DNA"/>
</dbReference>
<dbReference type="RefSeq" id="WP_011099372.1">
    <property type="nucleotide sequence ID" value="NC_004557.1"/>
</dbReference>
<dbReference type="SMR" id="Q895Y0"/>
<dbReference type="STRING" id="212717.CTC_01135"/>
<dbReference type="GeneID" id="24252589"/>
<dbReference type="KEGG" id="ctc:CTC_01135"/>
<dbReference type="HOGENOM" id="CLU_000604_1_22_9"/>
<dbReference type="OrthoDB" id="9804199at2"/>
<dbReference type="Proteomes" id="UP000001412">
    <property type="component" value="Chromosome"/>
</dbReference>
<dbReference type="GO" id="GO:0005886">
    <property type="term" value="C:plasma membrane"/>
    <property type="evidence" value="ECO:0007669"/>
    <property type="project" value="UniProtKB-SubCell"/>
</dbReference>
<dbReference type="GO" id="GO:0005524">
    <property type="term" value="F:ATP binding"/>
    <property type="evidence" value="ECO:0007669"/>
    <property type="project" value="UniProtKB-KW"/>
</dbReference>
<dbReference type="GO" id="GO:0016887">
    <property type="term" value="F:ATP hydrolysis activity"/>
    <property type="evidence" value="ECO:0007669"/>
    <property type="project" value="InterPro"/>
</dbReference>
<dbReference type="GO" id="GO:0015415">
    <property type="term" value="F:ATPase-coupled phosphate ion transmembrane transporter activity"/>
    <property type="evidence" value="ECO:0007669"/>
    <property type="project" value="UniProtKB-EC"/>
</dbReference>
<dbReference type="GO" id="GO:0035435">
    <property type="term" value="P:phosphate ion transmembrane transport"/>
    <property type="evidence" value="ECO:0007669"/>
    <property type="project" value="InterPro"/>
</dbReference>
<dbReference type="CDD" id="cd03260">
    <property type="entry name" value="ABC_PstB_phosphate_transporter"/>
    <property type="match status" value="1"/>
</dbReference>
<dbReference type="FunFam" id="3.40.50.300:FF:000132">
    <property type="entry name" value="Phosphate import ATP-binding protein PstB"/>
    <property type="match status" value="1"/>
</dbReference>
<dbReference type="Gene3D" id="3.40.50.300">
    <property type="entry name" value="P-loop containing nucleotide triphosphate hydrolases"/>
    <property type="match status" value="1"/>
</dbReference>
<dbReference type="InterPro" id="IPR003593">
    <property type="entry name" value="AAA+_ATPase"/>
</dbReference>
<dbReference type="InterPro" id="IPR003439">
    <property type="entry name" value="ABC_transporter-like_ATP-bd"/>
</dbReference>
<dbReference type="InterPro" id="IPR017871">
    <property type="entry name" value="ABC_transporter-like_CS"/>
</dbReference>
<dbReference type="InterPro" id="IPR027417">
    <property type="entry name" value="P-loop_NTPase"/>
</dbReference>
<dbReference type="InterPro" id="IPR005670">
    <property type="entry name" value="PstB-like"/>
</dbReference>
<dbReference type="NCBIfam" id="TIGR00972">
    <property type="entry name" value="3a0107s01c2"/>
    <property type="match status" value="1"/>
</dbReference>
<dbReference type="PANTHER" id="PTHR43423">
    <property type="entry name" value="ABC TRANSPORTER I FAMILY MEMBER 17"/>
    <property type="match status" value="1"/>
</dbReference>
<dbReference type="PANTHER" id="PTHR43423:SF1">
    <property type="entry name" value="ABC TRANSPORTER I FAMILY MEMBER 17"/>
    <property type="match status" value="1"/>
</dbReference>
<dbReference type="Pfam" id="PF00005">
    <property type="entry name" value="ABC_tran"/>
    <property type="match status" value="1"/>
</dbReference>
<dbReference type="SMART" id="SM00382">
    <property type="entry name" value="AAA"/>
    <property type="match status" value="1"/>
</dbReference>
<dbReference type="SUPFAM" id="SSF52540">
    <property type="entry name" value="P-loop containing nucleoside triphosphate hydrolases"/>
    <property type="match status" value="1"/>
</dbReference>
<dbReference type="PROSITE" id="PS00211">
    <property type="entry name" value="ABC_TRANSPORTER_1"/>
    <property type="match status" value="1"/>
</dbReference>
<dbReference type="PROSITE" id="PS50893">
    <property type="entry name" value="ABC_TRANSPORTER_2"/>
    <property type="match status" value="1"/>
</dbReference>
<dbReference type="PROSITE" id="PS51238">
    <property type="entry name" value="PSTB"/>
    <property type="match status" value="1"/>
</dbReference>
<sequence length="249" mass="28244">MNIVKIKDLSLFYGKTHALKNINMNIEKNKVTALIGPSGCGKSTFLRSINRMNDFIENVNIDGEVIFHGKDIYKEFDEIDLRKRVGMVFQKANPFPMSIYDNVAYGPRIHGIKNKNELDIIVEKSLKKAALWDEIKDRLNKNAQGLSGGQQQRLCIARTLAVEPELILMDEPTSALDPISTSKIEELMHTLKKDYPVIIVTHNMQQAGRISDDTAFFLSGEVIEFGKTSNIFYNPQDKRTEDYISGRFG</sequence>
<protein>
    <recommendedName>
        <fullName evidence="1">Phosphate import ATP-binding protein PstB</fullName>
        <ecNumber evidence="1">7.3.2.1</ecNumber>
    </recommendedName>
    <alternativeName>
        <fullName evidence="1">ABC phosphate transporter</fullName>
    </alternativeName>
    <alternativeName>
        <fullName evidence="1">Phosphate-transporting ATPase</fullName>
    </alternativeName>
</protein>
<evidence type="ECO:0000255" key="1">
    <source>
        <dbReference type="HAMAP-Rule" id="MF_01702"/>
    </source>
</evidence>
<reference key="1">
    <citation type="journal article" date="2003" name="Proc. Natl. Acad. Sci. U.S.A.">
        <title>The genome sequence of Clostridium tetani, the causative agent of tetanus disease.</title>
        <authorList>
            <person name="Brueggemann H."/>
            <person name="Baeumer S."/>
            <person name="Fricke W.F."/>
            <person name="Wiezer A."/>
            <person name="Liesegang H."/>
            <person name="Decker I."/>
            <person name="Herzberg C."/>
            <person name="Martinez-Arias R."/>
            <person name="Merkl R."/>
            <person name="Henne A."/>
            <person name="Gottschalk G."/>
        </authorList>
    </citation>
    <scope>NUCLEOTIDE SEQUENCE [LARGE SCALE GENOMIC DNA]</scope>
    <source>
        <strain>Massachusetts / E88</strain>
    </source>
</reference>
<comment type="function">
    <text evidence="1">Part of the ABC transporter complex PstSACB involved in phosphate import. Responsible for energy coupling to the transport system.</text>
</comment>
<comment type="catalytic activity">
    <reaction evidence="1">
        <text>phosphate(out) + ATP + H2O = ADP + 2 phosphate(in) + H(+)</text>
        <dbReference type="Rhea" id="RHEA:24440"/>
        <dbReference type="ChEBI" id="CHEBI:15377"/>
        <dbReference type="ChEBI" id="CHEBI:15378"/>
        <dbReference type="ChEBI" id="CHEBI:30616"/>
        <dbReference type="ChEBI" id="CHEBI:43474"/>
        <dbReference type="ChEBI" id="CHEBI:456216"/>
        <dbReference type="EC" id="7.3.2.1"/>
    </reaction>
</comment>
<comment type="subunit">
    <text evidence="1">The complex is composed of two ATP-binding proteins (PstB), two transmembrane proteins (PstC and PstA) and a solute-binding protein (PstS).</text>
</comment>
<comment type="subcellular location">
    <subcellularLocation>
        <location evidence="1">Cell membrane</location>
        <topology evidence="1">Peripheral membrane protein</topology>
    </subcellularLocation>
</comment>
<comment type="similarity">
    <text evidence="1">Belongs to the ABC transporter superfamily. Phosphate importer (TC 3.A.1.7) family.</text>
</comment>
<name>PSTB_CLOTE</name>
<gene>
    <name evidence="1" type="primary">pstB</name>
    <name type="ordered locus">CTC_01135</name>
</gene>
<keyword id="KW-0067">ATP-binding</keyword>
<keyword id="KW-1003">Cell membrane</keyword>
<keyword id="KW-0472">Membrane</keyword>
<keyword id="KW-0547">Nucleotide-binding</keyword>
<keyword id="KW-0592">Phosphate transport</keyword>
<keyword id="KW-1185">Reference proteome</keyword>
<keyword id="KW-1278">Translocase</keyword>
<keyword id="KW-0813">Transport</keyword>
<organism>
    <name type="scientific">Clostridium tetani (strain Massachusetts / E88)</name>
    <dbReference type="NCBI Taxonomy" id="212717"/>
    <lineage>
        <taxon>Bacteria</taxon>
        <taxon>Bacillati</taxon>
        <taxon>Bacillota</taxon>
        <taxon>Clostridia</taxon>
        <taxon>Eubacteriales</taxon>
        <taxon>Clostridiaceae</taxon>
        <taxon>Clostridium</taxon>
    </lineage>
</organism>